<protein>
    <recommendedName>
        <fullName>Protein lin-52 homolog</fullName>
    </recommendedName>
</protein>
<organism>
    <name type="scientific">Pongo abelii</name>
    <name type="common">Sumatran orangutan</name>
    <name type="synonym">Pongo pygmaeus abelii</name>
    <dbReference type="NCBI Taxonomy" id="9601"/>
    <lineage>
        <taxon>Eukaryota</taxon>
        <taxon>Metazoa</taxon>
        <taxon>Chordata</taxon>
        <taxon>Craniata</taxon>
        <taxon>Vertebrata</taxon>
        <taxon>Euteleostomi</taxon>
        <taxon>Mammalia</taxon>
        <taxon>Eutheria</taxon>
        <taxon>Euarchontoglires</taxon>
        <taxon>Primates</taxon>
        <taxon>Haplorrhini</taxon>
        <taxon>Catarrhini</taxon>
        <taxon>Hominidae</taxon>
        <taxon>Pongo</taxon>
    </lineage>
</organism>
<feature type="chain" id="PRO_0000252156" description="Protein lin-52 homolog">
    <location>
        <begin position="1"/>
        <end position="114"/>
    </location>
</feature>
<feature type="modified residue" description="Phosphoserine" evidence="2">
    <location>
        <position position="26"/>
    </location>
</feature>
<feature type="modified residue" description="Phosphoserine" evidence="2">
    <location>
        <position position="51"/>
    </location>
</feature>
<dbReference type="EMBL" id="CR925964">
    <property type="protein sequence ID" value="CAI29615.1"/>
    <property type="molecule type" value="mRNA"/>
</dbReference>
<dbReference type="RefSeq" id="NP_001127075.1">
    <property type="nucleotide sequence ID" value="NM_001133603.1"/>
</dbReference>
<dbReference type="SMR" id="Q5NVP8"/>
<dbReference type="STRING" id="9601.ENSPPYP00000006800"/>
<dbReference type="GeneID" id="100174105"/>
<dbReference type="KEGG" id="pon:100174105"/>
<dbReference type="CTD" id="91750"/>
<dbReference type="eggNOG" id="KOG4402">
    <property type="taxonomic scope" value="Eukaryota"/>
</dbReference>
<dbReference type="HOGENOM" id="CLU_143062_1_0_1"/>
<dbReference type="InParanoid" id="Q5NVP8"/>
<dbReference type="OrthoDB" id="5834362at2759"/>
<dbReference type="Proteomes" id="UP000001595">
    <property type="component" value="Unplaced"/>
</dbReference>
<dbReference type="GO" id="GO:0070176">
    <property type="term" value="C:DRM complex"/>
    <property type="evidence" value="ECO:0007669"/>
    <property type="project" value="InterPro"/>
</dbReference>
<dbReference type="GO" id="GO:0006355">
    <property type="term" value="P:regulation of DNA-templated transcription"/>
    <property type="evidence" value="ECO:0007669"/>
    <property type="project" value="InterPro"/>
</dbReference>
<dbReference type="InterPro" id="IPR018737">
    <property type="entry name" value="DREAM_LIN52"/>
</dbReference>
<dbReference type="PANTHER" id="PTHR31489">
    <property type="entry name" value="LIN52 FAMILY MEMBER"/>
    <property type="match status" value="1"/>
</dbReference>
<dbReference type="PANTHER" id="PTHR31489:SF2">
    <property type="entry name" value="PROTEIN LIN-52 HOMOLOG"/>
    <property type="match status" value="1"/>
</dbReference>
<dbReference type="Pfam" id="PF10044">
    <property type="entry name" value="LIN52"/>
    <property type="match status" value="1"/>
</dbReference>
<accession>Q5NVP8</accession>
<keyword id="KW-0597">Phosphoprotein</keyword>
<keyword id="KW-1185">Reference proteome</keyword>
<name>LIN52_PONAB</name>
<comment type="subunit">
    <text evidence="1">Component of the DREAM complex (also named LINC complex) at least composed of E2F4, E2F5, LIN9, LIN37, LIN52, LIN54, MYBL1, MYBL2, RBL1, RBL2, RBBP4, TFDP1 and TFDP2. The complex exists in quiescent cells where it represses cell cycle-dependent genes. It dissociates in S phase when LIN9, LIN37, LIN52 and LIN54 form a subcomplex that binds to MYBL2 (By similarity).</text>
</comment>
<comment type="similarity">
    <text evidence="3">Belongs to the lin-52 family.</text>
</comment>
<sequence length="114" mass="12843">MGWKMASPTDDLEASLLSFEKLDRASPDLWPEQLPGVAEFAASFKSPITSSPPKWMAEIERDDIDMLKELGSLTTANLMEKVRGLQNLAYQLGLDESREMTRGKFLNILEKPKK</sequence>
<reference key="1">
    <citation type="submission" date="2004-11" db="EMBL/GenBank/DDBJ databases">
        <authorList>
            <consortium name="The German cDNA consortium"/>
        </authorList>
    </citation>
    <scope>NUCLEOTIDE SEQUENCE [LARGE SCALE MRNA]</scope>
    <source>
        <tissue>Brain cortex</tissue>
    </source>
</reference>
<gene>
    <name type="primary">LIN52</name>
</gene>
<proteinExistence type="inferred from homology"/>
<evidence type="ECO:0000250" key="1"/>
<evidence type="ECO:0000250" key="2">
    <source>
        <dbReference type="UniProtKB" id="Q52LA3"/>
    </source>
</evidence>
<evidence type="ECO:0000305" key="3"/>